<reference key="1">
    <citation type="submission" date="2004-12" db="EMBL/GenBank/DDBJ databases">
        <title>The genome sequence of Borrelia hermsii and Borrelia turicatae: comparative analysis of two agents of endemic N. America relapsing fever.</title>
        <authorList>
            <person name="Porcella S.F."/>
            <person name="Raffel S.J."/>
            <person name="Schrumpf M.E."/>
            <person name="Montgomery B."/>
            <person name="Smith T."/>
            <person name="Schwan T.G."/>
        </authorList>
    </citation>
    <scope>NUCLEOTIDE SEQUENCE [LARGE SCALE GENOMIC DNA]</scope>
    <source>
        <strain>HS1 / DAH</strain>
    </source>
</reference>
<evidence type="ECO:0000255" key="1">
    <source>
        <dbReference type="HAMAP-Rule" id="MF_01326"/>
    </source>
</evidence>
<evidence type="ECO:0000305" key="2"/>
<accession>B2S0J2</accession>
<gene>
    <name evidence="1" type="primary">rplX</name>
    <name type="ordered locus">BH0489</name>
</gene>
<organism>
    <name type="scientific">Borrelia hermsii (strain HS1 / DAH)</name>
    <dbReference type="NCBI Taxonomy" id="314723"/>
    <lineage>
        <taxon>Bacteria</taxon>
        <taxon>Pseudomonadati</taxon>
        <taxon>Spirochaetota</taxon>
        <taxon>Spirochaetia</taxon>
        <taxon>Spirochaetales</taxon>
        <taxon>Borreliaceae</taxon>
        <taxon>Borrelia</taxon>
    </lineage>
</organism>
<name>RL24_BORHD</name>
<proteinExistence type="inferred from homology"/>
<comment type="function">
    <text evidence="1">One of two assembly initiator proteins, it binds directly to the 5'-end of the 23S rRNA, where it nucleates assembly of the 50S subunit.</text>
</comment>
<comment type="function">
    <text evidence="1">One of the proteins that surrounds the polypeptide exit tunnel on the outside of the subunit.</text>
</comment>
<comment type="subunit">
    <text evidence="1">Part of the 50S ribosomal subunit.</text>
</comment>
<comment type="similarity">
    <text evidence="1">Belongs to the universal ribosomal protein uL24 family.</text>
</comment>
<feature type="chain" id="PRO_1000141969" description="Large ribosomal subunit protein uL24">
    <location>
        <begin position="1"/>
        <end position="101"/>
    </location>
</feature>
<protein>
    <recommendedName>
        <fullName evidence="1">Large ribosomal subunit protein uL24</fullName>
    </recommendedName>
    <alternativeName>
        <fullName evidence="2">50S ribosomal protein L24</fullName>
    </alternativeName>
</protein>
<keyword id="KW-0687">Ribonucleoprotein</keyword>
<keyword id="KW-0689">Ribosomal protein</keyword>
<keyword id="KW-0694">RNA-binding</keyword>
<keyword id="KW-0699">rRNA-binding</keyword>
<sequence length="101" mass="11376">MKTKLKVGDNVKILCGKDRGKTGEIVSIDRKNLKVVVKSCNMVKKVIKARTPQEKSKIIDKEAPVDISNVMLFSNGITSRVGIKFENKEKKRYLKKNGENV</sequence>
<dbReference type="EMBL" id="CP000048">
    <property type="protein sequence ID" value="AAX16998.1"/>
    <property type="molecule type" value="Genomic_DNA"/>
</dbReference>
<dbReference type="RefSeq" id="WP_012422252.1">
    <property type="nucleotide sequence ID" value="NZ_CP073136.1"/>
</dbReference>
<dbReference type="SMR" id="B2S0J2"/>
<dbReference type="GeneID" id="71843307"/>
<dbReference type="KEGG" id="bhr:BH0489"/>
<dbReference type="HOGENOM" id="CLU_093315_2_3_12"/>
<dbReference type="Proteomes" id="UP000008834">
    <property type="component" value="Chromosome"/>
</dbReference>
<dbReference type="GO" id="GO:1990904">
    <property type="term" value="C:ribonucleoprotein complex"/>
    <property type="evidence" value="ECO:0007669"/>
    <property type="project" value="UniProtKB-KW"/>
</dbReference>
<dbReference type="GO" id="GO:0005840">
    <property type="term" value="C:ribosome"/>
    <property type="evidence" value="ECO:0007669"/>
    <property type="project" value="UniProtKB-KW"/>
</dbReference>
<dbReference type="GO" id="GO:0019843">
    <property type="term" value="F:rRNA binding"/>
    <property type="evidence" value="ECO:0007669"/>
    <property type="project" value="UniProtKB-UniRule"/>
</dbReference>
<dbReference type="GO" id="GO:0003735">
    <property type="term" value="F:structural constituent of ribosome"/>
    <property type="evidence" value="ECO:0007669"/>
    <property type="project" value="InterPro"/>
</dbReference>
<dbReference type="GO" id="GO:0006412">
    <property type="term" value="P:translation"/>
    <property type="evidence" value="ECO:0007669"/>
    <property type="project" value="UniProtKB-UniRule"/>
</dbReference>
<dbReference type="CDD" id="cd06089">
    <property type="entry name" value="KOW_RPL26"/>
    <property type="match status" value="1"/>
</dbReference>
<dbReference type="Gene3D" id="2.30.30.30">
    <property type="match status" value="1"/>
</dbReference>
<dbReference type="HAMAP" id="MF_01326_B">
    <property type="entry name" value="Ribosomal_uL24_B"/>
    <property type="match status" value="1"/>
</dbReference>
<dbReference type="InterPro" id="IPR005824">
    <property type="entry name" value="KOW"/>
</dbReference>
<dbReference type="InterPro" id="IPR014722">
    <property type="entry name" value="Rib_uL2_dom2"/>
</dbReference>
<dbReference type="InterPro" id="IPR003256">
    <property type="entry name" value="Ribosomal_uL24"/>
</dbReference>
<dbReference type="InterPro" id="IPR005825">
    <property type="entry name" value="Ribosomal_uL24_CS"/>
</dbReference>
<dbReference type="InterPro" id="IPR041988">
    <property type="entry name" value="Ribosomal_uL24_KOW"/>
</dbReference>
<dbReference type="InterPro" id="IPR008991">
    <property type="entry name" value="Translation_prot_SH3-like_sf"/>
</dbReference>
<dbReference type="NCBIfam" id="TIGR01079">
    <property type="entry name" value="rplX_bact"/>
    <property type="match status" value="1"/>
</dbReference>
<dbReference type="PANTHER" id="PTHR12903">
    <property type="entry name" value="MITOCHONDRIAL RIBOSOMAL PROTEIN L24"/>
    <property type="match status" value="1"/>
</dbReference>
<dbReference type="Pfam" id="PF00467">
    <property type="entry name" value="KOW"/>
    <property type="match status" value="1"/>
</dbReference>
<dbReference type="Pfam" id="PF17136">
    <property type="entry name" value="ribosomal_L24"/>
    <property type="match status" value="1"/>
</dbReference>
<dbReference type="SMART" id="SM00739">
    <property type="entry name" value="KOW"/>
    <property type="match status" value="1"/>
</dbReference>
<dbReference type="SUPFAM" id="SSF50104">
    <property type="entry name" value="Translation proteins SH3-like domain"/>
    <property type="match status" value="1"/>
</dbReference>
<dbReference type="PROSITE" id="PS01108">
    <property type="entry name" value="RIBOSOMAL_L24"/>
    <property type="match status" value="1"/>
</dbReference>